<proteinExistence type="inferred from homology"/>
<gene>
    <name type="ordered locus">MW0793</name>
</gene>
<dbReference type="EMBL" id="BA000033">
    <property type="protein sequence ID" value="BAB94658.1"/>
    <property type="molecule type" value="Genomic_DNA"/>
</dbReference>
<dbReference type="RefSeq" id="WP_000752917.1">
    <property type="nucleotide sequence ID" value="NC_003923.1"/>
</dbReference>
<dbReference type="SMR" id="Q7A1E3"/>
<dbReference type="KEGG" id="sam:MW0793"/>
<dbReference type="HOGENOM" id="CLU_135567_0_3_9"/>
<dbReference type="Gene3D" id="1.10.1470.10">
    <property type="entry name" value="YjbJ"/>
    <property type="match status" value="1"/>
</dbReference>
<dbReference type="InterPro" id="IPR008462">
    <property type="entry name" value="CsbD"/>
</dbReference>
<dbReference type="InterPro" id="IPR050423">
    <property type="entry name" value="UPF0337_stress_rsp"/>
</dbReference>
<dbReference type="InterPro" id="IPR036629">
    <property type="entry name" value="YjbJ_sf"/>
</dbReference>
<dbReference type="PANTHER" id="PTHR34977">
    <property type="entry name" value="UPF0337 PROTEIN YJBJ"/>
    <property type="match status" value="1"/>
</dbReference>
<dbReference type="PANTHER" id="PTHR34977:SF1">
    <property type="entry name" value="UPF0337 PROTEIN YJBJ"/>
    <property type="match status" value="1"/>
</dbReference>
<dbReference type="Pfam" id="PF05532">
    <property type="entry name" value="CsbD"/>
    <property type="match status" value="1"/>
</dbReference>
<dbReference type="SUPFAM" id="SSF69047">
    <property type="entry name" value="Hypothetical protein YjbJ"/>
    <property type="match status" value="1"/>
</dbReference>
<feature type="chain" id="PRO_0000272676" description="UPF0337 protein MW0793">
    <location>
        <begin position="1"/>
        <end position="64"/>
    </location>
</feature>
<feature type="region of interest" description="Disordered" evidence="1">
    <location>
        <begin position="1"/>
        <end position="40"/>
    </location>
</feature>
<feature type="compositionally biased region" description="Basic and acidic residues" evidence="1">
    <location>
        <begin position="25"/>
        <end position="40"/>
    </location>
</feature>
<protein>
    <recommendedName>
        <fullName>UPF0337 protein MW0793</fullName>
    </recommendedName>
</protein>
<accession>Q7A1E3</accession>
<evidence type="ECO:0000256" key="1">
    <source>
        <dbReference type="SAM" id="MobiDB-lite"/>
    </source>
</evidence>
<evidence type="ECO:0000305" key="2"/>
<name>Y793_STAAW</name>
<comment type="similarity">
    <text evidence="2">Belongs to the UPF0337 (CsbD) family.</text>
</comment>
<sequence length="64" mass="7019">MADESKFEQAKGNVKETVGNVTDNKNLENEGKEDKASGKAKEFVENAKEKATDFIDKVKGNKGE</sequence>
<reference key="1">
    <citation type="journal article" date="2002" name="Lancet">
        <title>Genome and virulence determinants of high virulence community-acquired MRSA.</title>
        <authorList>
            <person name="Baba T."/>
            <person name="Takeuchi F."/>
            <person name="Kuroda M."/>
            <person name="Yuzawa H."/>
            <person name="Aoki K."/>
            <person name="Oguchi A."/>
            <person name="Nagai Y."/>
            <person name="Iwama N."/>
            <person name="Asano K."/>
            <person name="Naimi T."/>
            <person name="Kuroda H."/>
            <person name="Cui L."/>
            <person name="Yamamoto K."/>
            <person name="Hiramatsu K."/>
        </authorList>
    </citation>
    <scope>NUCLEOTIDE SEQUENCE [LARGE SCALE GENOMIC DNA]</scope>
    <source>
        <strain>MW2</strain>
    </source>
</reference>
<organism>
    <name type="scientific">Staphylococcus aureus (strain MW2)</name>
    <dbReference type="NCBI Taxonomy" id="196620"/>
    <lineage>
        <taxon>Bacteria</taxon>
        <taxon>Bacillati</taxon>
        <taxon>Bacillota</taxon>
        <taxon>Bacilli</taxon>
        <taxon>Bacillales</taxon>
        <taxon>Staphylococcaceae</taxon>
        <taxon>Staphylococcus</taxon>
    </lineage>
</organism>